<name>IML2_KLULA</name>
<proteinExistence type="inferred from homology"/>
<sequence length="725" mass="82016">MFRVFNALTGAGSPKATELSGEERTKFILQQAHDFEIALQAMDYVLDDNAEVGLKLLADNQATSPGDATVGALAKGVIEFLEATLGFEPEVMKKASTTLAEAEQLSLKSRAKLQKLNIKTSSLYPPGTEYAVTYTESCLLHALLMLFSESMVEGAKALFKLRKAYHMLQDILKEINASEKRKRSSIYLQEINESTASFISSGTCFTSYDIPYKLTPEEEQDKELLDLANKVYSLRRKRLCGAHIGNSPAINRLRDDVGAASLKKGSDEETQEFQLLSDNANINQATMDEFIHSGVNLCFGILQVVLSLIPPAIGAVLSVVGFHGSREEGLRLVWKSTKDRNIHGGIGLLGLLFYYDGPFQFTDIDFDIPAARDDNLPVTEMDRPTLLHPGKILTSALLQARALFPNSALWLLQEARMLSKQGRLKEAVDLLDSIDHNTIEMKQVKALIVFEKATTLVYMHEFERGAETMLIMLSISEWSHALYTYFAGCCYLEMFRKYEMGILNGENAAEKKAYYKERATNLVFESANMVGKKKFMSKILPLDRFLLRKVDQFKKFQNIIKSSDPLDSIGVSPVHELIYFYNGYNRMTMKELNLSLKSLTEYRNPTIDLQNPDQELIKDLLTSLVLRRTGKIEEGCKILDTQVLPQLFTIQNDKVKYIKKTEDPWVYPTAFYERALFSWKLKGMNGLHEAHEWLIRAQNYQDDYELSTRIGMKIKAAKDRVEESI</sequence>
<organism>
    <name type="scientific">Kluyveromyces lactis (strain ATCC 8585 / CBS 2359 / DSM 70799 / NBRC 1267 / NRRL Y-1140 / WM37)</name>
    <name type="common">Yeast</name>
    <name type="synonym">Candida sphaerica</name>
    <dbReference type="NCBI Taxonomy" id="284590"/>
    <lineage>
        <taxon>Eukaryota</taxon>
        <taxon>Fungi</taxon>
        <taxon>Dikarya</taxon>
        <taxon>Ascomycota</taxon>
        <taxon>Saccharomycotina</taxon>
        <taxon>Saccharomycetes</taxon>
        <taxon>Saccharomycetales</taxon>
        <taxon>Saccharomycetaceae</taxon>
        <taxon>Kluyveromyces</taxon>
    </lineage>
</organism>
<reference key="1">
    <citation type="journal article" date="2004" name="Nature">
        <title>Genome evolution in yeasts.</title>
        <authorList>
            <person name="Dujon B."/>
            <person name="Sherman D."/>
            <person name="Fischer G."/>
            <person name="Durrens P."/>
            <person name="Casaregola S."/>
            <person name="Lafontaine I."/>
            <person name="de Montigny J."/>
            <person name="Marck C."/>
            <person name="Neuveglise C."/>
            <person name="Talla E."/>
            <person name="Goffard N."/>
            <person name="Frangeul L."/>
            <person name="Aigle M."/>
            <person name="Anthouard V."/>
            <person name="Babour A."/>
            <person name="Barbe V."/>
            <person name="Barnay S."/>
            <person name="Blanchin S."/>
            <person name="Beckerich J.-M."/>
            <person name="Beyne E."/>
            <person name="Bleykasten C."/>
            <person name="Boisrame A."/>
            <person name="Boyer J."/>
            <person name="Cattolico L."/>
            <person name="Confanioleri F."/>
            <person name="de Daruvar A."/>
            <person name="Despons L."/>
            <person name="Fabre E."/>
            <person name="Fairhead C."/>
            <person name="Ferry-Dumazet H."/>
            <person name="Groppi A."/>
            <person name="Hantraye F."/>
            <person name="Hennequin C."/>
            <person name="Jauniaux N."/>
            <person name="Joyet P."/>
            <person name="Kachouri R."/>
            <person name="Kerrest A."/>
            <person name="Koszul R."/>
            <person name="Lemaire M."/>
            <person name="Lesur I."/>
            <person name="Ma L."/>
            <person name="Muller H."/>
            <person name="Nicaud J.-M."/>
            <person name="Nikolski M."/>
            <person name="Oztas S."/>
            <person name="Ozier-Kalogeropoulos O."/>
            <person name="Pellenz S."/>
            <person name="Potier S."/>
            <person name="Richard G.-F."/>
            <person name="Straub M.-L."/>
            <person name="Suleau A."/>
            <person name="Swennen D."/>
            <person name="Tekaia F."/>
            <person name="Wesolowski-Louvel M."/>
            <person name="Westhof E."/>
            <person name="Wirth B."/>
            <person name="Zeniou-Meyer M."/>
            <person name="Zivanovic Y."/>
            <person name="Bolotin-Fukuhara M."/>
            <person name="Thierry A."/>
            <person name="Bouchier C."/>
            <person name="Caudron B."/>
            <person name="Scarpelli C."/>
            <person name="Gaillardin C."/>
            <person name="Weissenbach J."/>
            <person name="Wincker P."/>
            <person name="Souciet J.-L."/>
        </authorList>
    </citation>
    <scope>NUCLEOTIDE SEQUENCE [LARGE SCALE GENOMIC DNA]</scope>
    <source>
        <strain>ATCC 8585 / CBS 2359 / DSM 70799 / NBRC 1267 / NRRL Y-1140 / WM37</strain>
    </source>
</reference>
<keyword id="KW-0963">Cytoplasm</keyword>
<keyword id="KW-0539">Nucleus</keyword>
<keyword id="KW-0597">Phosphoprotein</keyword>
<keyword id="KW-1185">Reference proteome</keyword>
<protein>
    <recommendedName>
        <fullName>Inclusion body clearance protein IML2</fullName>
    </recommendedName>
</protein>
<evidence type="ECO:0000250" key="1">
    <source>
        <dbReference type="UniProtKB" id="P47031"/>
    </source>
</evidence>
<evidence type="ECO:0000305" key="2"/>
<accession>Q6CSC1</accession>
<comment type="function">
    <text evidence="1">Inclusion body (IB) resident protein that interacts strongly with lipid droplet (LD) proteins. Involved in LD-mediated IB clearing after protein folding stress, probably by enabling access to the IBs of an LD-stored soluble sterol derivative that acts as a chaperone in inclusion clearing.</text>
</comment>
<comment type="subunit">
    <text evidence="1">Interacts with lipid droplet proteins.</text>
</comment>
<comment type="subcellular location">
    <subcellularLocation>
        <location evidence="1">Cytoplasm</location>
    </subcellularLocation>
    <subcellularLocation>
        <location evidence="1">Nucleus</location>
    </subcellularLocation>
    <text evidence="1">Localized exclusively in cytoplasmic inclusion bodies under protein folding stress conditions.</text>
</comment>
<comment type="similarity">
    <text evidence="2">Belongs to the IML2 family.</text>
</comment>
<dbReference type="EMBL" id="CR382124">
    <property type="protein sequence ID" value="CAH00264.1"/>
    <property type="molecule type" value="Genomic_DNA"/>
</dbReference>
<dbReference type="RefSeq" id="XP_453168.1">
    <property type="nucleotide sequence ID" value="XM_453168.1"/>
</dbReference>
<dbReference type="FunCoup" id="Q6CSC1">
    <property type="interactions" value="149"/>
</dbReference>
<dbReference type="PaxDb" id="284590-Q6CSC1"/>
<dbReference type="KEGG" id="kla:KLLA0_D02244g"/>
<dbReference type="eggNOG" id="KOG3783">
    <property type="taxonomic scope" value="Eukaryota"/>
</dbReference>
<dbReference type="HOGENOM" id="CLU_014926_0_0_1"/>
<dbReference type="InParanoid" id="Q6CSC1"/>
<dbReference type="OMA" id="WNGYNRM"/>
<dbReference type="Proteomes" id="UP000000598">
    <property type="component" value="Chromosome D"/>
</dbReference>
<dbReference type="GO" id="GO:0005829">
    <property type="term" value="C:cytosol"/>
    <property type="evidence" value="ECO:0007669"/>
    <property type="project" value="TreeGrafter"/>
</dbReference>
<dbReference type="GO" id="GO:0005741">
    <property type="term" value="C:mitochondrial outer membrane"/>
    <property type="evidence" value="ECO:0007669"/>
    <property type="project" value="TreeGrafter"/>
</dbReference>
<dbReference type="GO" id="GO:0005634">
    <property type="term" value="C:nucleus"/>
    <property type="evidence" value="ECO:0007669"/>
    <property type="project" value="UniProtKB-SubCell"/>
</dbReference>
<dbReference type="InterPro" id="IPR019412">
    <property type="entry name" value="Iml2/TPR_39"/>
</dbReference>
<dbReference type="PANTHER" id="PTHR31859">
    <property type="entry name" value="TETRATRICOPEPTIDE REPEAT PROTEIN 39 FAMILY MEMBER"/>
    <property type="match status" value="1"/>
</dbReference>
<dbReference type="PANTHER" id="PTHR31859:SF1">
    <property type="entry name" value="TETRATRICOPEPTIDE REPEAT PROTEIN 39C"/>
    <property type="match status" value="1"/>
</dbReference>
<dbReference type="Pfam" id="PF10300">
    <property type="entry name" value="Iml2-TPR_39"/>
    <property type="match status" value="1"/>
</dbReference>
<gene>
    <name type="primary">IML2</name>
    <name type="ordered locus">KLLA0D02244g</name>
</gene>
<feature type="chain" id="PRO_0000333349" description="Inclusion body clearance protein IML2">
    <location>
        <begin position="1"/>
        <end position="725"/>
    </location>
</feature>